<keyword id="KW-0966">Cell projection</keyword>
<keyword id="KW-0175">Coiled coil</keyword>
<keyword id="KW-0963">Cytoplasm</keyword>
<keyword id="KW-0206">Cytoskeleton</keyword>
<keyword id="KW-1185">Reference proteome</keyword>
<keyword id="KW-0677">Repeat</keyword>
<keyword id="KW-0853">WD repeat</keyword>
<reference key="1">
    <citation type="journal article" date="2009" name="PLoS Biol.">
        <title>Lineage-specific biology revealed by a finished genome assembly of the mouse.</title>
        <authorList>
            <person name="Church D.M."/>
            <person name="Goodstadt L."/>
            <person name="Hillier L.W."/>
            <person name="Zody M.C."/>
            <person name="Goldstein S."/>
            <person name="She X."/>
            <person name="Bult C.J."/>
            <person name="Agarwala R."/>
            <person name="Cherry J.L."/>
            <person name="DiCuccio M."/>
            <person name="Hlavina W."/>
            <person name="Kapustin Y."/>
            <person name="Meric P."/>
            <person name="Maglott D."/>
            <person name="Birtle Z."/>
            <person name="Marques A.C."/>
            <person name="Graves T."/>
            <person name="Zhou S."/>
            <person name="Teague B."/>
            <person name="Potamousis K."/>
            <person name="Churas C."/>
            <person name="Place M."/>
            <person name="Herschleb J."/>
            <person name="Runnheim R."/>
            <person name="Forrest D."/>
            <person name="Amos-Landgraf J."/>
            <person name="Schwartz D.C."/>
            <person name="Cheng Z."/>
            <person name="Lindblad-Toh K."/>
            <person name="Eichler E.E."/>
            <person name="Ponting C.P."/>
        </authorList>
    </citation>
    <scope>NUCLEOTIDE SEQUENCE [LARGE SCALE GENOMIC DNA]</scope>
    <source>
        <strain>C57BL/6J</strain>
    </source>
</reference>
<reference key="2">
    <citation type="journal article" date="2004" name="Genome Res.">
        <title>The status, quality, and expansion of the NIH full-length cDNA project: the Mammalian Gene Collection (MGC).</title>
        <authorList>
            <consortium name="The MGC Project Team"/>
        </authorList>
    </citation>
    <scope>NUCLEOTIDE SEQUENCE [LARGE SCALE MRNA] OF 1100-1249</scope>
    <source>
        <tissue>Uterus</tissue>
    </source>
</reference>
<reference key="3">
    <citation type="journal article" date="2005" name="Science">
        <title>The transcriptional landscape of the mammalian genome.</title>
        <authorList>
            <person name="Carninci P."/>
            <person name="Kasukawa T."/>
            <person name="Katayama S."/>
            <person name="Gough J."/>
            <person name="Frith M.C."/>
            <person name="Maeda N."/>
            <person name="Oyama R."/>
            <person name="Ravasi T."/>
            <person name="Lenhard B."/>
            <person name="Wells C."/>
            <person name="Kodzius R."/>
            <person name="Shimokawa K."/>
            <person name="Bajic V.B."/>
            <person name="Brenner S.E."/>
            <person name="Batalov S."/>
            <person name="Forrest A.R."/>
            <person name="Zavolan M."/>
            <person name="Davis M.J."/>
            <person name="Wilming L.G."/>
            <person name="Aidinis V."/>
            <person name="Allen J.E."/>
            <person name="Ambesi-Impiombato A."/>
            <person name="Apweiler R."/>
            <person name="Aturaliya R.N."/>
            <person name="Bailey T.L."/>
            <person name="Bansal M."/>
            <person name="Baxter L."/>
            <person name="Beisel K.W."/>
            <person name="Bersano T."/>
            <person name="Bono H."/>
            <person name="Chalk A.M."/>
            <person name="Chiu K.P."/>
            <person name="Choudhary V."/>
            <person name="Christoffels A."/>
            <person name="Clutterbuck D.R."/>
            <person name="Crowe M.L."/>
            <person name="Dalla E."/>
            <person name="Dalrymple B.P."/>
            <person name="de Bono B."/>
            <person name="Della Gatta G."/>
            <person name="di Bernardo D."/>
            <person name="Down T."/>
            <person name="Engstrom P."/>
            <person name="Fagiolini M."/>
            <person name="Faulkner G."/>
            <person name="Fletcher C.F."/>
            <person name="Fukushima T."/>
            <person name="Furuno M."/>
            <person name="Futaki S."/>
            <person name="Gariboldi M."/>
            <person name="Georgii-Hemming P."/>
            <person name="Gingeras T.R."/>
            <person name="Gojobori T."/>
            <person name="Green R.E."/>
            <person name="Gustincich S."/>
            <person name="Harbers M."/>
            <person name="Hayashi Y."/>
            <person name="Hensch T.K."/>
            <person name="Hirokawa N."/>
            <person name="Hill D."/>
            <person name="Huminiecki L."/>
            <person name="Iacono M."/>
            <person name="Ikeo K."/>
            <person name="Iwama A."/>
            <person name="Ishikawa T."/>
            <person name="Jakt M."/>
            <person name="Kanapin A."/>
            <person name="Katoh M."/>
            <person name="Kawasawa Y."/>
            <person name="Kelso J."/>
            <person name="Kitamura H."/>
            <person name="Kitano H."/>
            <person name="Kollias G."/>
            <person name="Krishnan S.P."/>
            <person name="Kruger A."/>
            <person name="Kummerfeld S.K."/>
            <person name="Kurochkin I.V."/>
            <person name="Lareau L.F."/>
            <person name="Lazarevic D."/>
            <person name="Lipovich L."/>
            <person name="Liu J."/>
            <person name="Liuni S."/>
            <person name="McWilliam S."/>
            <person name="Madan Babu M."/>
            <person name="Madera M."/>
            <person name="Marchionni L."/>
            <person name="Matsuda H."/>
            <person name="Matsuzawa S."/>
            <person name="Miki H."/>
            <person name="Mignone F."/>
            <person name="Miyake S."/>
            <person name="Morris K."/>
            <person name="Mottagui-Tabar S."/>
            <person name="Mulder N."/>
            <person name="Nakano N."/>
            <person name="Nakauchi H."/>
            <person name="Ng P."/>
            <person name="Nilsson R."/>
            <person name="Nishiguchi S."/>
            <person name="Nishikawa S."/>
            <person name="Nori F."/>
            <person name="Ohara O."/>
            <person name="Okazaki Y."/>
            <person name="Orlando V."/>
            <person name="Pang K.C."/>
            <person name="Pavan W.J."/>
            <person name="Pavesi G."/>
            <person name="Pesole G."/>
            <person name="Petrovsky N."/>
            <person name="Piazza S."/>
            <person name="Reed J."/>
            <person name="Reid J.F."/>
            <person name="Ring B.Z."/>
            <person name="Ringwald M."/>
            <person name="Rost B."/>
            <person name="Ruan Y."/>
            <person name="Salzberg S.L."/>
            <person name="Sandelin A."/>
            <person name="Schneider C."/>
            <person name="Schoenbach C."/>
            <person name="Sekiguchi K."/>
            <person name="Semple C.A."/>
            <person name="Seno S."/>
            <person name="Sessa L."/>
            <person name="Sheng Y."/>
            <person name="Shibata Y."/>
            <person name="Shimada H."/>
            <person name="Shimada K."/>
            <person name="Silva D."/>
            <person name="Sinclair B."/>
            <person name="Sperling S."/>
            <person name="Stupka E."/>
            <person name="Sugiura K."/>
            <person name="Sultana R."/>
            <person name="Takenaka Y."/>
            <person name="Taki K."/>
            <person name="Tammoja K."/>
            <person name="Tan S.L."/>
            <person name="Tang S."/>
            <person name="Taylor M.S."/>
            <person name="Tegner J."/>
            <person name="Teichmann S.A."/>
            <person name="Ueda H.R."/>
            <person name="van Nimwegen E."/>
            <person name="Verardo R."/>
            <person name="Wei C.L."/>
            <person name="Yagi K."/>
            <person name="Yamanishi H."/>
            <person name="Zabarovsky E."/>
            <person name="Zhu S."/>
            <person name="Zimmer A."/>
            <person name="Hide W."/>
            <person name="Bult C."/>
            <person name="Grimmond S.M."/>
            <person name="Teasdale R.D."/>
            <person name="Liu E.T."/>
            <person name="Brusic V."/>
            <person name="Quackenbush J."/>
            <person name="Wahlestedt C."/>
            <person name="Mattick J.S."/>
            <person name="Hume D.A."/>
            <person name="Kai C."/>
            <person name="Sasaki D."/>
            <person name="Tomaru Y."/>
            <person name="Fukuda S."/>
            <person name="Kanamori-Katayama M."/>
            <person name="Suzuki M."/>
            <person name="Aoki J."/>
            <person name="Arakawa T."/>
            <person name="Iida J."/>
            <person name="Imamura K."/>
            <person name="Itoh M."/>
            <person name="Kato T."/>
            <person name="Kawaji H."/>
            <person name="Kawagashira N."/>
            <person name="Kawashima T."/>
            <person name="Kojima M."/>
            <person name="Kondo S."/>
            <person name="Konno H."/>
            <person name="Nakano K."/>
            <person name="Ninomiya N."/>
            <person name="Nishio T."/>
            <person name="Okada M."/>
            <person name="Plessy C."/>
            <person name="Shibata K."/>
            <person name="Shiraki T."/>
            <person name="Suzuki S."/>
            <person name="Tagami M."/>
            <person name="Waki K."/>
            <person name="Watahiki A."/>
            <person name="Okamura-Oho Y."/>
            <person name="Suzuki H."/>
            <person name="Kawai J."/>
            <person name="Hayashizaki Y."/>
        </authorList>
    </citation>
    <scope>NUCLEOTIDE SEQUENCE [LARGE SCALE MRNA] OF 1102-1249</scope>
    <source>
        <strain>C57BL/6J</strain>
        <tissue>Embryo</tissue>
    </source>
</reference>
<reference key="4">
    <citation type="journal article" date="2010" name="Cell">
        <title>A tissue-specific atlas of mouse protein phosphorylation and expression.</title>
        <authorList>
            <person name="Huttlin E.L."/>
            <person name="Jedrychowski M.P."/>
            <person name="Elias J.E."/>
            <person name="Goswami T."/>
            <person name="Rad R."/>
            <person name="Beausoleil S.A."/>
            <person name="Villen J."/>
            <person name="Haas W."/>
            <person name="Sowa M.E."/>
            <person name="Gygi S.P."/>
        </authorList>
    </citation>
    <scope>IDENTIFICATION BY MASS SPECTROMETRY [LARGE SCALE ANALYSIS]</scope>
    <source>
        <tissue>Testis</tissue>
    </source>
</reference>
<reference key="5">
    <citation type="journal article" date="2011" name="Am. J. Med. Genet. A">
        <title>Genomic strategy identifies a missense mutation in WD-repeat domain 65 (WDR65) in an individual with Van der Woude syndrome.</title>
        <authorList>
            <person name="Rorick N.K."/>
            <person name="Kinoshita A."/>
            <person name="Weirather J.L."/>
            <person name="Peyrard-Janvid M."/>
            <person name="de Lima R.L."/>
            <person name="Dunnwald M."/>
            <person name="Shanske A.L."/>
            <person name="Moretti-Ferreira D."/>
            <person name="Koillinen H."/>
            <person name="Kere J."/>
            <person name="Mansilla M.A."/>
            <person name="Murray J.C."/>
            <person name="Goudy S.L."/>
            <person name="Schutte B.C."/>
        </authorList>
    </citation>
    <scope>TISSUE SPECIFICITY</scope>
    <scope>DEVELOPMENTAL STAGE</scope>
</reference>
<feature type="chain" id="PRO_0000346432" description="Cilia- and flagella-associated protein 57" evidence="6">
    <location>
        <begin position="1"/>
        <end position="1249"/>
    </location>
</feature>
<feature type="repeat" description="WD 1">
    <location>
        <begin position="105"/>
        <end position="148"/>
    </location>
</feature>
<feature type="repeat" description="WD 2">
    <location>
        <begin position="195"/>
        <end position="233"/>
    </location>
</feature>
<feature type="repeat" description="WD 3">
    <location>
        <begin position="335"/>
        <end position="374"/>
    </location>
</feature>
<feature type="repeat" description="WD 4">
    <location>
        <begin position="386"/>
        <end position="425"/>
    </location>
</feature>
<feature type="repeat" description="WD 5">
    <location>
        <begin position="427"/>
        <end position="469"/>
    </location>
</feature>
<feature type="repeat" description="WD 6">
    <location>
        <begin position="471"/>
        <end position="506"/>
    </location>
</feature>
<feature type="repeat" description="WD 7">
    <location>
        <begin position="509"/>
        <end position="548"/>
    </location>
</feature>
<feature type="repeat" description="WD 8">
    <location>
        <begin position="635"/>
        <end position="674"/>
    </location>
</feature>
<feature type="coiled-coil region" evidence="3">
    <location>
        <begin position="690"/>
        <end position="1056"/>
    </location>
</feature>
<feature type="coiled-coil region" evidence="3">
    <location>
        <begin position="1094"/>
        <end position="1165"/>
    </location>
</feature>
<protein>
    <recommendedName>
        <fullName evidence="7">Cilia- and flagella-associated protein 57</fullName>
    </recommendedName>
    <alternativeName>
        <fullName evidence="5">WD repeat-containing protein 65</fullName>
    </alternativeName>
</protein>
<gene>
    <name evidence="7" type="primary">Cfap57</name>
    <name evidence="5" type="synonym">Wdr65</name>
</gene>
<name>CFA57_MOUSE</name>
<dbReference type="EMBL" id="AL669952">
    <property type="status" value="NOT_ANNOTATED_CDS"/>
    <property type="molecule type" value="Genomic_DNA"/>
</dbReference>
<dbReference type="EMBL" id="BX321881">
    <property type="status" value="NOT_ANNOTATED_CDS"/>
    <property type="molecule type" value="Genomic_DNA"/>
</dbReference>
<dbReference type="EMBL" id="BX842610">
    <property type="status" value="NOT_ANNOTATED_CDS"/>
    <property type="molecule type" value="Genomic_DNA"/>
</dbReference>
<dbReference type="EMBL" id="BC062805">
    <property type="protein sequence ID" value="AAH62805.1"/>
    <property type="status" value="ALT_INIT"/>
    <property type="molecule type" value="mRNA"/>
</dbReference>
<dbReference type="EMBL" id="AK003848">
    <property type="protein sequence ID" value="BAB23034.1"/>
    <property type="status" value="ALT_INIT"/>
    <property type="molecule type" value="mRNA"/>
</dbReference>
<dbReference type="CCDS" id="CCDS51286.1"/>
<dbReference type="RefSeq" id="NP_081065.2">
    <property type="nucleotide sequence ID" value="NM_026789.5"/>
</dbReference>
<dbReference type="RefSeq" id="XP_006503433.1">
    <property type="nucleotide sequence ID" value="XM_006503370.2"/>
</dbReference>
<dbReference type="SMR" id="Q9D180"/>
<dbReference type="BioGRID" id="212959">
    <property type="interactions" value="3"/>
</dbReference>
<dbReference type="FunCoup" id="Q9D180">
    <property type="interactions" value="39"/>
</dbReference>
<dbReference type="STRING" id="10090.ENSMUSP00000071863"/>
<dbReference type="iPTMnet" id="Q9D180"/>
<dbReference type="PhosphoSitePlus" id="Q9D180"/>
<dbReference type="SwissPalm" id="Q9D180"/>
<dbReference type="PaxDb" id="10090-ENSMUSP00000071863"/>
<dbReference type="ProteomicsDB" id="281540"/>
<dbReference type="Antibodypedia" id="34814">
    <property type="antibodies" value="20 antibodies from 9 providers"/>
</dbReference>
<dbReference type="DNASU" id="68625"/>
<dbReference type="Ensembl" id="ENSMUST00000071972.11">
    <property type="protein sequence ID" value="ENSMUSP00000071863.5"/>
    <property type="gene ID" value="ENSMUSG00000028730.15"/>
</dbReference>
<dbReference type="Ensembl" id="ENSMUST00000081921.7">
    <property type="protein sequence ID" value="ENSMUSP00000080592.7"/>
    <property type="gene ID" value="ENSMUSG00000028730.15"/>
</dbReference>
<dbReference type="GeneID" id="68625"/>
<dbReference type="KEGG" id="mmu:68625"/>
<dbReference type="UCSC" id="uc012dkc.2">
    <property type="organism name" value="mouse"/>
</dbReference>
<dbReference type="AGR" id="MGI:2686209"/>
<dbReference type="CTD" id="149465"/>
<dbReference type="MGI" id="MGI:2686209">
    <property type="gene designation" value="Cfap57"/>
</dbReference>
<dbReference type="VEuPathDB" id="HostDB:ENSMUSG00000028730"/>
<dbReference type="eggNOG" id="ENOG502QTIS">
    <property type="taxonomic scope" value="Eukaryota"/>
</dbReference>
<dbReference type="GeneTree" id="ENSGT00620000088018"/>
<dbReference type="HOGENOM" id="CLU_003598_0_0_1"/>
<dbReference type="InParanoid" id="Q9D180"/>
<dbReference type="OMA" id="FPHCNAV"/>
<dbReference type="OrthoDB" id="10251741at2759"/>
<dbReference type="PhylomeDB" id="Q9D180"/>
<dbReference type="TreeFam" id="TF324236"/>
<dbReference type="BioGRID-ORCS" id="68625">
    <property type="hits" value="4 hits in 76 CRISPR screens"/>
</dbReference>
<dbReference type="ChiTaRS" id="Cfap57">
    <property type="organism name" value="mouse"/>
</dbReference>
<dbReference type="PRO" id="PR:Q9D180"/>
<dbReference type="Proteomes" id="UP000000589">
    <property type="component" value="Chromosome 4"/>
</dbReference>
<dbReference type="RNAct" id="Q9D180">
    <property type="molecule type" value="protein"/>
</dbReference>
<dbReference type="Bgee" id="ENSMUSG00000028730">
    <property type="expression patterns" value="Expressed in seminiferous tubule of testis and 48 other cell types or tissues"/>
</dbReference>
<dbReference type="GO" id="GO:0005737">
    <property type="term" value="C:cytoplasm"/>
    <property type="evidence" value="ECO:0007669"/>
    <property type="project" value="UniProtKB-KW"/>
</dbReference>
<dbReference type="GO" id="GO:0005856">
    <property type="term" value="C:cytoskeleton"/>
    <property type="evidence" value="ECO:0007669"/>
    <property type="project" value="UniProtKB-KW"/>
</dbReference>
<dbReference type="GO" id="GO:0036126">
    <property type="term" value="C:sperm flagellum"/>
    <property type="evidence" value="ECO:0000315"/>
    <property type="project" value="MGI"/>
</dbReference>
<dbReference type="GO" id="GO:0070286">
    <property type="term" value="P:axonemal dynein complex assembly"/>
    <property type="evidence" value="ECO:0000315"/>
    <property type="project" value="MGI"/>
</dbReference>
<dbReference type="GO" id="GO:0044782">
    <property type="term" value="P:cilium organization"/>
    <property type="evidence" value="ECO:0000315"/>
    <property type="project" value="MGI"/>
</dbReference>
<dbReference type="GO" id="GO:0007338">
    <property type="term" value="P:single fertilization"/>
    <property type="evidence" value="ECO:0000315"/>
    <property type="project" value="MGI"/>
</dbReference>
<dbReference type="GO" id="GO:0120316">
    <property type="term" value="P:sperm flagellum assembly"/>
    <property type="evidence" value="ECO:0000315"/>
    <property type="project" value="MGI"/>
</dbReference>
<dbReference type="FunFam" id="1.10.287.1490:FF:000014">
    <property type="entry name" value="AGAP008095-PA"/>
    <property type="match status" value="1"/>
</dbReference>
<dbReference type="FunFam" id="2.130.10.10:FF:000357">
    <property type="entry name" value="Cilia and flagella associated protein 57"/>
    <property type="match status" value="1"/>
</dbReference>
<dbReference type="FunFam" id="2.130.10.10:FF:000271">
    <property type="entry name" value="cilia- and flagella-associated protein 57"/>
    <property type="match status" value="1"/>
</dbReference>
<dbReference type="Gene3D" id="1.10.287.1490">
    <property type="match status" value="1"/>
</dbReference>
<dbReference type="Gene3D" id="2.130.10.10">
    <property type="entry name" value="YVTN repeat-like/Quinoprotein amine dehydrogenase"/>
    <property type="match status" value="2"/>
</dbReference>
<dbReference type="InterPro" id="IPR055442">
    <property type="entry name" value="Beta-prop_EML-like_2nd"/>
</dbReference>
<dbReference type="InterPro" id="IPR052993">
    <property type="entry name" value="CFA-57"/>
</dbReference>
<dbReference type="InterPro" id="IPR011047">
    <property type="entry name" value="Quinoprotein_ADH-like_sf"/>
</dbReference>
<dbReference type="InterPro" id="IPR015943">
    <property type="entry name" value="WD40/YVTN_repeat-like_dom_sf"/>
</dbReference>
<dbReference type="InterPro" id="IPR036322">
    <property type="entry name" value="WD40_repeat_dom_sf"/>
</dbReference>
<dbReference type="InterPro" id="IPR001680">
    <property type="entry name" value="WD40_rpt"/>
</dbReference>
<dbReference type="PANTHER" id="PTHR32215">
    <property type="entry name" value="CILIA- AND FLAGELLA-ASSOCIATED PROTEIN 57"/>
    <property type="match status" value="1"/>
</dbReference>
<dbReference type="PANTHER" id="PTHR32215:SF0">
    <property type="entry name" value="CILIA- AND FLAGELLA-ASSOCIATED PROTEIN 57"/>
    <property type="match status" value="1"/>
</dbReference>
<dbReference type="Pfam" id="PF23414">
    <property type="entry name" value="Beta-prop_EML_2"/>
    <property type="match status" value="1"/>
</dbReference>
<dbReference type="SMART" id="SM00320">
    <property type="entry name" value="WD40"/>
    <property type="match status" value="7"/>
</dbReference>
<dbReference type="SUPFAM" id="SSF50998">
    <property type="entry name" value="Quinoprotein alcohol dehydrogenase-like"/>
    <property type="match status" value="1"/>
</dbReference>
<dbReference type="SUPFAM" id="SSF50978">
    <property type="entry name" value="WD40 repeat-like"/>
    <property type="match status" value="1"/>
</dbReference>
<dbReference type="PROSITE" id="PS50082">
    <property type="entry name" value="WD_REPEATS_2"/>
    <property type="match status" value="2"/>
</dbReference>
<dbReference type="PROSITE" id="PS50294">
    <property type="entry name" value="WD_REPEATS_REGION"/>
    <property type="match status" value="2"/>
</dbReference>
<comment type="function">
    <text evidence="1">Associates with components of the nexin-dynein regulatory complex (N-DRC), a key regulator of ciliary/flagellar motility, and might act as an inner dynein arm (IDA) hub or linkage.</text>
</comment>
<comment type="subunit">
    <text evidence="1">May form homodimers. Associates with components of the nexin-dynein regulatory complex (N-DRC) and the CFAP184:CFAP263 complex.</text>
</comment>
<comment type="subcellular location">
    <subcellularLocation>
        <location evidence="2">Cytoplasm</location>
        <location evidence="2">Cytoskeleton</location>
        <location evidence="2">Cilium axoneme</location>
    </subcellularLocation>
</comment>
<comment type="tissue specificity">
    <text evidence="4">Predominanly expressed in testis, lung and skin. Weak expression in brain and kidney.</text>
</comment>
<comment type="developmental stage">
    <text evidence="4">Expression in the palate increases from 12.5 up to 15.5 dpc. At 14.5, detected in the nasal epithelium and detected in the medial edge epithelium. At 15.5 dpc, very strong expression in the nasal respiratory epithelium and epidermis, but not in the oral epithelium. In the nasal epithelium, limited to the respiratory, but not the olfactory, epithelium.</text>
</comment>
<comment type="similarity">
    <text>Belongs to the CFAP57 family.</text>
</comment>
<comment type="sequence caution" evidence="6">
    <conflict type="erroneous initiation">
        <sequence resource="EMBL-CDS" id="AAH62805"/>
    </conflict>
    <text>Truncated N-terminus.</text>
</comment>
<comment type="sequence caution" evidence="6">
    <conflict type="erroneous initiation">
        <sequence resource="EMBL-CDS" id="BAB23034"/>
    </conflict>
    <text>Truncated N-terminus.</text>
</comment>
<accession>Q9D180</accession>
<accession>A2ACY9</accession>
<evidence type="ECO:0000250" key="1">
    <source>
        <dbReference type="UniProtKB" id="Q234G8"/>
    </source>
</evidence>
<evidence type="ECO:0000250" key="2">
    <source>
        <dbReference type="UniProtKB" id="Q96MR6"/>
    </source>
</evidence>
<evidence type="ECO:0000255" key="3"/>
<evidence type="ECO:0000269" key="4">
    <source>
    </source>
</evidence>
<evidence type="ECO:0000303" key="5">
    <source>
    </source>
</evidence>
<evidence type="ECO:0000305" key="6"/>
<evidence type="ECO:0000312" key="7">
    <source>
        <dbReference type="MGI" id="MGI:2686209"/>
    </source>
</evidence>
<organism>
    <name type="scientific">Mus musculus</name>
    <name type="common">Mouse</name>
    <dbReference type="NCBI Taxonomy" id="10090"/>
    <lineage>
        <taxon>Eukaryota</taxon>
        <taxon>Metazoa</taxon>
        <taxon>Chordata</taxon>
        <taxon>Craniata</taxon>
        <taxon>Vertebrata</taxon>
        <taxon>Euteleostomi</taxon>
        <taxon>Mammalia</taxon>
        <taxon>Eutheria</taxon>
        <taxon>Euarchontoglires</taxon>
        <taxon>Glires</taxon>
        <taxon>Rodentia</taxon>
        <taxon>Myomorpha</taxon>
        <taxon>Muroidea</taxon>
        <taxon>Muridae</taxon>
        <taxon>Murinae</taxon>
        <taxon>Mus</taxon>
        <taxon>Mus</taxon>
    </lineage>
</organism>
<sequence>MSTVVAQALHVFGLRPHVTNNVFFFDEQIIIFPSGNHCVKYNIDQKWQKFIAGSDKSQGMLALAISPNRRYLAISETVQEKPAVTIYELSSIPCRKRKVLNNFDFQVQKFTSMAFSPDSKYLLTQTSPPDSNLVYWLWEKQKVMAIIKADSQNNPIYQVSISSQDNSQVCITGSGVFKLLRFAEGTLKQINFQRGESSNYLAHAWVSEDRVIVGTDTGKLFLFESGDQRWETSIMVKESTSSRSLEVIQESESLIEFPPLSSPVSSVERMDITTNTQQQAMPQVFAIAAYSKGFACSAGPGRVLLFEKVEEKDFYRESREIRIPTDQQSNDPSQSDKQDVLCLCFSPSEETLIASTNKNQLYSITMSLTEISKGEAAHFEYLLYPLHSASITGLDTCIRKPLIATCSLDRSVRIWNYESNTLELYKEYQEEAYTVSLHPSGHYIVVGFADKLRLMNLLIDDIRPFKEYSVRGCKECSFSNGGHLFAAVNGNVIHIFTTTSLENINILKGHTGKIRSLVWNLDDSKLVSAGTDGAVYEWNLSTGKRETECVLKSCSYNSVTTSPDAKVIFAVGSDQTLKEISDSLILREIPAFDVIYTSITISHSGRMIFVGTSVGTIRAMKYPLSLQKEYNEYQAHAGPVMKMLLTFDDQFLLTVGEDGCLFTWKVFDKDGRGIKREREVGFAEEVLVTKTDMEEKAQIMLELKTRVEELKMENEYQLRLKDMNYTEKIKELTDKFIQEMESLKTKNQVLKTEKEKQDISHRERLEELVDKQTRELQDLECCNNQKLLLEYEKYQELQLKSQRMQEEYEKQLRDNDETKSQALEELTEFYEAKLQEKTGLLEEAQEDVRQQLREFEETKKQIEEDEDREIQDIKTKYERKLRDEKESNLRLKGETGIMRKKFSSLQKEIEERTNDIELLKSEQMKLQGIIRSLEKDIQGLKREIQERDETIQDKEKRIYDLKKKNQELEKFKFVLDYKIKELKKQIEPRENEIKVMKEQIQEMEAELERFHKQNTQLELNITELLQKLRATDQEMRKEQQKERDLEALVRRFKTDLHNCVAYIQEPGLLKEKIRGLFEKYVQRADMVEIAGLNSDLQQEYARQREHLERNLATLKKKVIKEGELHRTDYVRIMQENVSLIKEINELRRELKLTRSQIYDLESALKVSKKTRSQEVPESVISKDVVGSTSTMRLNEQEETGRIIEMQRLEIRRLRDQIQEQEQVPGFHTIAGVRLPSIVDSDVDFEVHTK</sequence>
<proteinExistence type="evidence at protein level"/>